<organism>
    <name type="scientific">Methanococcus maripaludis (strain C6 / ATCC BAA-1332)</name>
    <dbReference type="NCBI Taxonomy" id="444158"/>
    <lineage>
        <taxon>Archaea</taxon>
        <taxon>Methanobacteriati</taxon>
        <taxon>Methanobacteriota</taxon>
        <taxon>Methanomada group</taxon>
        <taxon>Methanococci</taxon>
        <taxon>Methanococcales</taxon>
        <taxon>Methanococcaceae</taxon>
        <taxon>Methanococcus</taxon>
    </lineage>
</organism>
<feature type="chain" id="PRO_0000365308" description="tRNA (cytidine(56)-2'-O)-methyltransferase">
    <location>
        <begin position="1"/>
        <end position="179"/>
    </location>
</feature>
<feature type="binding site" evidence="1">
    <location>
        <position position="82"/>
    </location>
    <ligand>
        <name>S-adenosyl-L-methionine</name>
        <dbReference type="ChEBI" id="CHEBI:59789"/>
    </ligand>
</feature>
<feature type="binding site" evidence="1">
    <location>
        <begin position="112"/>
        <end position="116"/>
    </location>
    <ligand>
        <name>S-adenosyl-L-methionine</name>
        <dbReference type="ChEBI" id="CHEBI:59789"/>
    </ligand>
</feature>
<feature type="binding site" evidence="1">
    <location>
        <begin position="130"/>
        <end position="137"/>
    </location>
    <ligand>
        <name>S-adenosyl-L-methionine</name>
        <dbReference type="ChEBI" id="CHEBI:59789"/>
    </ligand>
</feature>
<keyword id="KW-0963">Cytoplasm</keyword>
<keyword id="KW-0489">Methyltransferase</keyword>
<keyword id="KW-0949">S-adenosyl-L-methionine</keyword>
<keyword id="KW-0808">Transferase</keyword>
<keyword id="KW-0819">tRNA processing</keyword>
<accession>A9A9N8</accession>
<reference key="1">
    <citation type="submission" date="2007-10" db="EMBL/GenBank/DDBJ databases">
        <title>Complete sequence of Methanococcus maripaludis C6.</title>
        <authorList>
            <consortium name="US DOE Joint Genome Institute"/>
            <person name="Copeland A."/>
            <person name="Lucas S."/>
            <person name="Lapidus A."/>
            <person name="Barry K."/>
            <person name="Glavina del Rio T."/>
            <person name="Dalin E."/>
            <person name="Tice H."/>
            <person name="Pitluck S."/>
            <person name="Clum A."/>
            <person name="Schmutz J."/>
            <person name="Larimer F."/>
            <person name="Land M."/>
            <person name="Hauser L."/>
            <person name="Kyrpides N."/>
            <person name="Mikhailova N."/>
            <person name="Sieprawska-Lupa M."/>
            <person name="Whitman W.B."/>
            <person name="Richardson P."/>
        </authorList>
    </citation>
    <scope>NUCLEOTIDE SEQUENCE [LARGE SCALE GENOMIC DNA]</scope>
    <source>
        <strain>C6 / ATCC BAA-1332</strain>
    </source>
</reference>
<protein>
    <recommendedName>
        <fullName evidence="1">tRNA (cytidine(56)-2'-O)-methyltransferase</fullName>
        <ecNumber evidence="1">2.1.1.206</ecNumber>
    </recommendedName>
    <alternativeName>
        <fullName evidence="1">tRNA ribose 2'-O-methyltransferase aTrm56</fullName>
    </alternativeName>
</protein>
<sequence length="179" mass="20504">MTIEILRLGHRGERDKRISTHVALTSRALGAKKIIFTEEDKHVKESVERIVDSWGGDFKFEVVKSWRTYTKRFKDNGIVVHLTMYGENINKIMTEIREDISKTNKNLLLIIGAEKVPREAYDLADYNLSVGNQPHSEVAALAIFLDRLTEGKTLYSEYNDAKIKVTPSKSEKCVFVEKD</sequence>
<evidence type="ECO:0000255" key="1">
    <source>
        <dbReference type="HAMAP-Rule" id="MF_00077"/>
    </source>
</evidence>
<proteinExistence type="inferred from homology"/>
<name>TRM56_METM6</name>
<comment type="function">
    <text evidence="1">Specifically catalyzes the AdoMet-dependent 2'-O-ribose methylation of cytidine at position 56 in tRNAs.</text>
</comment>
<comment type="catalytic activity">
    <reaction evidence="1">
        <text>cytidine(56) in tRNA + S-adenosyl-L-methionine = 2'-O-methylcytidine(56) in tRNA + S-adenosyl-L-homocysteine + H(+)</text>
        <dbReference type="Rhea" id="RHEA:42968"/>
        <dbReference type="Rhea" id="RHEA-COMP:10308"/>
        <dbReference type="Rhea" id="RHEA-COMP:10309"/>
        <dbReference type="ChEBI" id="CHEBI:15378"/>
        <dbReference type="ChEBI" id="CHEBI:57856"/>
        <dbReference type="ChEBI" id="CHEBI:59789"/>
        <dbReference type="ChEBI" id="CHEBI:74495"/>
        <dbReference type="ChEBI" id="CHEBI:82748"/>
        <dbReference type="EC" id="2.1.1.206"/>
    </reaction>
</comment>
<comment type="subunit">
    <text evidence="1">Homodimer.</text>
</comment>
<comment type="subcellular location">
    <subcellularLocation>
        <location evidence="1">Cytoplasm</location>
    </subcellularLocation>
</comment>
<comment type="similarity">
    <text evidence="1">Belongs to the aTrm56 family.</text>
</comment>
<dbReference type="EC" id="2.1.1.206" evidence="1"/>
<dbReference type="EMBL" id="CP000867">
    <property type="protein sequence ID" value="ABX02061.1"/>
    <property type="molecule type" value="Genomic_DNA"/>
</dbReference>
<dbReference type="SMR" id="A9A9N8"/>
<dbReference type="STRING" id="444158.MmarC6_1248"/>
<dbReference type="KEGG" id="mmx:MmarC6_1248"/>
<dbReference type="eggNOG" id="arCOG01857">
    <property type="taxonomic scope" value="Archaea"/>
</dbReference>
<dbReference type="HOGENOM" id="CLU_123709_0_0_2"/>
<dbReference type="OrthoDB" id="14397at2157"/>
<dbReference type="PhylomeDB" id="A9A9N8"/>
<dbReference type="GO" id="GO:0005737">
    <property type="term" value="C:cytoplasm"/>
    <property type="evidence" value="ECO:0007669"/>
    <property type="project" value="UniProtKB-SubCell"/>
</dbReference>
<dbReference type="GO" id="GO:0106059">
    <property type="term" value="F:tRNA (cytidine(56)-2'-O)-methyltransferase activity"/>
    <property type="evidence" value="ECO:0007669"/>
    <property type="project" value="UniProtKB-EC"/>
</dbReference>
<dbReference type="GO" id="GO:0002128">
    <property type="term" value="P:tRNA nucleoside ribose methylation"/>
    <property type="evidence" value="ECO:0007669"/>
    <property type="project" value="UniProtKB-UniRule"/>
</dbReference>
<dbReference type="CDD" id="cd18083">
    <property type="entry name" value="aTrm56-like"/>
    <property type="match status" value="1"/>
</dbReference>
<dbReference type="Gene3D" id="3.40.1280.10">
    <property type="match status" value="1"/>
</dbReference>
<dbReference type="HAMAP" id="MF_00077">
    <property type="entry name" value="tRNA_methyltr_aTrm56"/>
    <property type="match status" value="1"/>
</dbReference>
<dbReference type="InterPro" id="IPR029028">
    <property type="entry name" value="Alpha/beta_knot_MTases"/>
</dbReference>
<dbReference type="InterPro" id="IPR029026">
    <property type="entry name" value="tRNA_m1G_MTases_N"/>
</dbReference>
<dbReference type="InterPro" id="IPR002845">
    <property type="entry name" value="tRNA_mtfrase_aTrm56"/>
</dbReference>
<dbReference type="NCBIfam" id="NF003048">
    <property type="entry name" value="PRK03958.1"/>
    <property type="match status" value="1"/>
</dbReference>
<dbReference type="PANTHER" id="PTHR42197">
    <property type="entry name" value="TRNA (CYTIDINE(56)-2'-O)-METHYLTRANSFERASE"/>
    <property type="match status" value="1"/>
</dbReference>
<dbReference type="PANTHER" id="PTHR42197:SF1">
    <property type="entry name" value="TRNA (CYTIDINE(56)-2'-O)-METHYLTRANSFERASE"/>
    <property type="match status" value="1"/>
</dbReference>
<dbReference type="Pfam" id="PF01994">
    <property type="entry name" value="Trm56"/>
    <property type="match status" value="1"/>
</dbReference>
<dbReference type="PIRSF" id="PIRSF016123">
    <property type="entry name" value="UCP016123"/>
    <property type="match status" value="1"/>
</dbReference>
<dbReference type="SUPFAM" id="SSF75217">
    <property type="entry name" value="alpha/beta knot"/>
    <property type="match status" value="1"/>
</dbReference>
<gene>
    <name type="ordered locus">MmarC6_1248</name>
</gene>